<sequence>MRNPKSFCVVAGFVRLPKSSLGQARYYSIPNDVSIPASKRKFIPSSGTYPKGFLVAGAHAGVKESNTQFPDVALICSETPCSAAAVFTTNKFQAAPVQVSKQVLEKRQGTGIRGVVINSGCANAVTGKGGLEDAKMMSAKVDECNGTPSTGPQDTSTLVMSTGVIGQRLPIKKILDAIPTAHSNLASTHSTWLATARAICTTDTFPKLLSRTFTLPSSPNRQYCLAGMTKGAGMIHPNMATLLGILCTDVPISPSALKALLTHAVSRSFNAISIDGDTSTNDTIALLANGAAGGEAIITTSSPDYAAMQTILTSFAQSLAQLVVRDGEGATKFITVRVCNSPSHADAKVIASTIARSPLVKTALYGKDANWGRILCAIGYAQGIAEGTVVPERTSVSFRPVDGSAELKLLVNGEPEAVDEERAARILQDEDLEIVVDLGGGQKGEKGLGGEEGLYWFCDFSHEYVTINGDYRT</sequence>
<dbReference type="EC" id="2.3.1.35" evidence="1"/>
<dbReference type="EC" id="2.3.1.1" evidence="1"/>
<dbReference type="EMBL" id="GG663364">
    <property type="protein sequence ID" value="EEH10450.1"/>
    <property type="molecule type" value="Genomic_DNA"/>
</dbReference>
<dbReference type="RefSeq" id="XP_045290930.1">
    <property type="nucleotide sequence ID" value="XM_045429144.1"/>
</dbReference>
<dbReference type="SMR" id="C0NE02"/>
<dbReference type="FunCoup" id="C0NE02">
    <property type="interactions" value="269"/>
</dbReference>
<dbReference type="STRING" id="447093.C0NE02"/>
<dbReference type="GeneID" id="69035111"/>
<dbReference type="VEuPathDB" id="FungiDB:I7I50_00359"/>
<dbReference type="HOGENOM" id="CLU_027172_1_0_1"/>
<dbReference type="InParanoid" id="C0NE02"/>
<dbReference type="UniPathway" id="UPA00068">
    <property type="reaction ID" value="UER00106"/>
</dbReference>
<dbReference type="UniPathway" id="UPA00068">
    <property type="reaction ID" value="UER00111"/>
</dbReference>
<dbReference type="Proteomes" id="UP000001631">
    <property type="component" value="Unassembled WGS sequence"/>
</dbReference>
<dbReference type="GO" id="GO:0005759">
    <property type="term" value="C:mitochondrial matrix"/>
    <property type="evidence" value="ECO:0007669"/>
    <property type="project" value="UniProtKB-SubCell"/>
</dbReference>
<dbReference type="GO" id="GO:0004358">
    <property type="term" value="F:glutamate N-acetyltransferase activity"/>
    <property type="evidence" value="ECO:0007669"/>
    <property type="project" value="UniProtKB-UniRule"/>
</dbReference>
<dbReference type="GO" id="GO:0004042">
    <property type="term" value="F:L-glutamate N-acetyltransferase activity"/>
    <property type="evidence" value="ECO:0007669"/>
    <property type="project" value="UniProtKB-UniRule"/>
</dbReference>
<dbReference type="GO" id="GO:0006526">
    <property type="term" value="P:L-arginine biosynthetic process"/>
    <property type="evidence" value="ECO:0007669"/>
    <property type="project" value="UniProtKB-UniRule"/>
</dbReference>
<dbReference type="GO" id="GO:0006592">
    <property type="term" value="P:ornithine biosynthetic process"/>
    <property type="evidence" value="ECO:0007669"/>
    <property type="project" value="TreeGrafter"/>
</dbReference>
<dbReference type="CDD" id="cd02152">
    <property type="entry name" value="OAT"/>
    <property type="match status" value="1"/>
</dbReference>
<dbReference type="FunFam" id="3.60.70.12:FF:000001">
    <property type="entry name" value="Arginine biosynthesis bifunctional protein ArgJ, chloroplastic"/>
    <property type="match status" value="1"/>
</dbReference>
<dbReference type="FunFam" id="3.10.20.340:FF:000002">
    <property type="entry name" value="Arginine biosynthesis bifunctional protein ArgJ, mitochondrial"/>
    <property type="match status" value="1"/>
</dbReference>
<dbReference type="FunFam" id="3.30.2330.10:FF:000001">
    <property type="entry name" value="Arginine biosynthesis bifunctional protein ArgJ, mitochondrial"/>
    <property type="match status" value="1"/>
</dbReference>
<dbReference type="Gene3D" id="3.30.2330.10">
    <property type="entry name" value="arginine biosynthesis bifunctional protein suprefamily"/>
    <property type="match status" value="1"/>
</dbReference>
<dbReference type="Gene3D" id="3.10.20.340">
    <property type="entry name" value="ArgJ beta chain, C-terminal domain"/>
    <property type="match status" value="1"/>
</dbReference>
<dbReference type="Gene3D" id="3.60.70.12">
    <property type="entry name" value="L-amino peptidase D-ALA esterase/amidase"/>
    <property type="match status" value="1"/>
</dbReference>
<dbReference type="HAMAP" id="MF_01106">
    <property type="entry name" value="ArgJ"/>
    <property type="match status" value="1"/>
</dbReference>
<dbReference type="InterPro" id="IPR002813">
    <property type="entry name" value="Arg_biosynth_ArgJ"/>
</dbReference>
<dbReference type="InterPro" id="IPR016117">
    <property type="entry name" value="ArgJ-like_dom_sf"/>
</dbReference>
<dbReference type="InterPro" id="IPR042195">
    <property type="entry name" value="ArgJ_beta_C"/>
</dbReference>
<dbReference type="NCBIfam" id="TIGR00120">
    <property type="entry name" value="ArgJ"/>
    <property type="match status" value="1"/>
</dbReference>
<dbReference type="NCBIfam" id="NF003802">
    <property type="entry name" value="PRK05388.1"/>
    <property type="match status" value="1"/>
</dbReference>
<dbReference type="PANTHER" id="PTHR23100">
    <property type="entry name" value="ARGININE BIOSYNTHESIS BIFUNCTIONAL PROTEIN ARGJ"/>
    <property type="match status" value="1"/>
</dbReference>
<dbReference type="PANTHER" id="PTHR23100:SF0">
    <property type="entry name" value="ARGININE BIOSYNTHESIS BIFUNCTIONAL PROTEIN ARGJ, MITOCHONDRIAL"/>
    <property type="match status" value="1"/>
</dbReference>
<dbReference type="Pfam" id="PF01960">
    <property type="entry name" value="ArgJ"/>
    <property type="match status" value="1"/>
</dbReference>
<dbReference type="SUPFAM" id="SSF56266">
    <property type="entry name" value="DmpA/ArgJ-like"/>
    <property type="match status" value="1"/>
</dbReference>
<keyword id="KW-0012">Acyltransferase</keyword>
<keyword id="KW-0028">Amino-acid biosynthesis</keyword>
<keyword id="KW-0055">Arginine biosynthesis</keyword>
<keyword id="KW-0068">Autocatalytic cleavage</keyword>
<keyword id="KW-0496">Mitochondrion</keyword>
<keyword id="KW-0511">Multifunctional enzyme</keyword>
<keyword id="KW-1185">Reference proteome</keyword>
<keyword id="KW-0808">Transferase</keyword>
<organism>
    <name type="scientific">Ajellomyces capsulatus (strain G186AR / H82 / ATCC MYA-2454 / RMSCC 2432)</name>
    <name type="common">Darling's disease fungus</name>
    <name type="synonym">Histoplasma capsulatum</name>
    <dbReference type="NCBI Taxonomy" id="447093"/>
    <lineage>
        <taxon>Eukaryota</taxon>
        <taxon>Fungi</taxon>
        <taxon>Dikarya</taxon>
        <taxon>Ascomycota</taxon>
        <taxon>Pezizomycotina</taxon>
        <taxon>Eurotiomycetes</taxon>
        <taxon>Eurotiomycetidae</taxon>
        <taxon>Onygenales</taxon>
        <taxon>Ajellomycetaceae</taxon>
        <taxon>Histoplasma</taxon>
    </lineage>
</organism>
<comment type="function">
    <text evidence="1">Catalyzes two activities which are involved in the cyclic version of arginine biosynthesis: the synthesis of acetylglutamate from glutamate and acetyl-CoA, and of ornithine by transacetylation between acetylornithine and glutamate.</text>
</comment>
<comment type="catalytic activity">
    <reaction evidence="1">
        <text>N(2)-acetyl-L-ornithine + L-glutamate = N-acetyl-L-glutamate + L-ornithine</text>
        <dbReference type="Rhea" id="RHEA:15349"/>
        <dbReference type="ChEBI" id="CHEBI:29985"/>
        <dbReference type="ChEBI" id="CHEBI:44337"/>
        <dbReference type="ChEBI" id="CHEBI:46911"/>
        <dbReference type="ChEBI" id="CHEBI:57805"/>
        <dbReference type="EC" id="2.3.1.35"/>
    </reaction>
</comment>
<comment type="catalytic activity">
    <reaction evidence="1">
        <text>L-glutamate + acetyl-CoA = N-acetyl-L-glutamate + CoA + H(+)</text>
        <dbReference type="Rhea" id="RHEA:24292"/>
        <dbReference type="ChEBI" id="CHEBI:15378"/>
        <dbReference type="ChEBI" id="CHEBI:29985"/>
        <dbReference type="ChEBI" id="CHEBI:44337"/>
        <dbReference type="ChEBI" id="CHEBI:57287"/>
        <dbReference type="ChEBI" id="CHEBI:57288"/>
        <dbReference type="EC" id="2.3.1.1"/>
    </reaction>
</comment>
<comment type="pathway">
    <text evidence="1">Amino-acid biosynthesis; L-arginine biosynthesis; L-ornithine and N-acetyl-L-glutamate from L-glutamate and N(2)-acetyl-L-ornithine (cyclic): step 1/1.</text>
</comment>
<comment type="pathway">
    <text evidence="1">Amino-acid biosynthesis; L-arginine biosynthesis; N(2)-acetyl-L-ornithine from L-glutamate: step 1/4.</text>
</comment>
<comment type="subunit">
    <text evidence="1">Heterodimer of an alpha and a beta chain.</text>
</comment>
<comment type="subcellular location">
    <subcellularLocation>
        <location evidence="1">Mitochondrion matrix</location>
    </subcellularLocation>
</comment>
<comment type="PTM">
    <text evidence="1">The alpha and beta chains are autoproteolytically processed from a single precursor protein within the mitochondrion.</text>
</comment>
<comment type="miscellaneous">
    <text evidence="1">This protein may be expected to contain an N-terminal transit peptide but none has been predicted.</text>
</comment>
<comment type="similarity">
    <text evidence="1">Belongs to the ArgJ family.</text>
</comment>
<gene>
    <name type="ORF">HCBG_02095</name>
</gene>
<proteinExistence type="inferred from homology"/>
<protein>
    <recommendedName>
        <fullName evidence="1">Arginine biosynthesis bifunctional protein ArgJ, mitochondrial</fullName>
    </recommendedName>
    <domain>
        <recommendedName>
            <fullName evidence="1">Glutamate N-acetyltransferase</fullName>
            <shortName evidence="1">GAT</shortName>
            <ecNumber evidence="1">2.3.1.35</ecNumber>
        </recommendedName>
        <alternativeName>
            <fullName evidence="1">Ornithine acetyltransferase</fullName>
            <shortName evidence="1">OATase</shortName>
        </alternativeName>
        <alternativeName>
            <fullName evidence="1">Ornithine transacetylase</fullName>
        </alternativeName>
    </domain>
    <domain>
        <recommendedName>
            <fullName evidence="1">Amino-acid acetyltransferase</fullName>
            <ecNumber evidence="1">2.3.1.1</ecNumber>
        </recommendedName>
        <alternativeName>
            <fullName evidence="1">N-acetylglutamate synthase</fullName>
            <shortName evidence="1">AGS</shortName>
        </alternativeName>
    </domain>
    <component>
        <recommendedName>
            <fullName evidence="1">Arginine biosynthesis bifunctional protein ArgJ alpha chain</fullName>
        </recommendedName>
    </component>
    <component>
        <recommendedName>
            <fullName evidence="1">Arginine biosynthesis bifunctional protein ArgJ beta chain</fullName>
        </recommendedName>
    </component>
</protein>
<accession>C0NE02</accession>
<feature type="chain" id="PRO_0000398000" description="Arginine biosynthesis bifunctional protein ArgJ alpha chain" evidence="1">
    <location>
        <begin position="1"/>
        <end position="240"/>
    </location>
</feature>
<feature type="chain" id="PRO_0000398001" description="Arginine biosynthesis bifunctional protein ArgJ beta chain" evidence="1">
    <location>
        <begin position="241"/>
        <end position="473"/>
    </location>
</feature>
<feature type="active site" description="Nucleophile" evidence="1">
    <location>
        <position position="241"/>
    </location>
</feature>
<feature type="binding site" evidence="1">
    <location>
        <position position="201"/>
    </location>
    <ligand>
        <name>substrate</name>
    </ligand>
</feature>
<feature type="binding site" evidence="1">
    <location>
        <position position="230"/>
    </location>
    <ligand>
        <name>substrate</name>
    </ligand>
</feature>
<feature type="binding site" evidence="1">
    <location>
        <position position="241"/>
    </location>
    <ligand>
        <name>substrate</name>
    </ligand>
</feature>
<feature type="binding site" evidence="1">
    <location>
        <position position="328"/>
    </location>
    <ligand>
        <name>substrate</name>
    </ligand>
</feature>
<feature type="binding site" evidence="1">
    <location>
        <position position="468"/>
    </location>
    <ligand>
        <name>substrate</name>
    </ligand>
</feature>
<feature type="binding site" evidence="1">
    <location>
        <position position="473"/>
    </location>
    <ligand>
        <name>substrate</name>
    </ligand>
</feature>
<feature type="site" description="Involved in the stabilization of negative charge on the oxyanion by the formation of the oxyanion hole" evidence="1">
    <location>
        <position position="162"/>
    </location>
</feature>
<feature type="site" description="Involved in the stabilization of negative charge on the oxyanion by the formation of the oxyanion hole" evidence="1">
    <location>
        <position position="163"/>
    </location>
</feature>
<feature type="site" description="Cleavage; by autolysis" evidence="1">
    <location>
        <begin position="240"/>
        <end position="241"/>
    </location>
</feature>
<evidence type="ECO:0000255" key="1">
    <source>
        <dbReference type="HAMAP-Rule" id="MF_03124"/>
    </source>
</evidence>
<reference key="1">
    <citation type="submission" date="2009-02" db="EMBL/GenBank/DDBJ databases">
        <title>The genome sequence of Ajellomyces capsulatus strain G186AR.</title>
        <authorList>
            <person name="Champion M."/>
            <person name="Cuomo C.A."/>
            <person name="Ma L.-J."/>
            <person name="Henn M.R."/>
            <person name="Sil A."/>
            <person name="Goldman B."/>
            <person name="Young S.K."/>
            <person name="Kodira C.D."/>
            <person name="Zeng Q."/>
            <person name="Koehrsen M."/>
            <person name="Alvarado L."/>
            <person name="Berlin A."/>
            <person name="Borenstein D."/>
            <person name="Chen Z."/>
            <person name="Engels R."/>
            <person name="Freedman E."/>
            <person name="Gellesch M."/>
            <person name="Goldberg J."/>
            <person name="Griggs A."/>
            <person name="Gujja S."/>
            <person name="Heiman D."/>
            <person name="Hepburn T."/>
            <person name="Howarth C."/>
            <person name="Jen D."/>
            <person name="Larson L."/>
            <person name="Lewis B."/>
            <person name="Mehta T."/>
            <person name="Park D."/>
            <person name="Pearson M."/>
            <person name="Roberts A."/>
            <person name="Saif S."/>
            <person name="Shea T."/>
            <person name="Shenoy N."/>
            <person name="Sisk P."/>
            <person name="Stolte C."/>
            <person name="Sykes S."/>
            <person name="Walk T."/>
            <person name="White J."/>
            <person name="Yandava C."/>
            <person name="Klein B."/>
            <person name="McEwen J.G."/>
            <person name="Puccia R."/>
            <person name="Goldman G.H."/>
            <person name="Felipe M.S."/>
            <person name="Nino-Vega G."/>
            <person name="San-Blas G."/>
            <person name="Taylor J."/>
            <person name="Mendoza L."/>
            <person name="Galagan J.E."/>
            <person name="Nusbaum C."/>
            <person name="Birren B.W."/>
        </authorList>
    </citation>
    <scope>NUCLEOTIDE SEQUENCE [LARGE SCALE GENOMIC DNA]</scope>
    <source>
        <strain>G186AR / H82 / ATCC MYA-2454 / RMSCC 2432</strain>
    </source>
</reference>
<name>ARGJ_AJECG</name>